<dbReference type="EMBL" id="CP000507">
    <property type="protein sequence ID" value="ABL98427.1"/>
    <property type="molecule type" value="Genomic_DNA"/>
</dbReference>
<dbReference type="RefSeq" id="WP_011758337.1">
    <property type="nucleotide sequence ID" value="NC_008700.1"/>
</dbReference>
<dbReference type="SMR" id="A1S221"/>
<dbReference type="STRING" id="326297.Sama_0216"/>
<dbReference type="KEGG" id="saz:Sama_0216"/>
<dbReference type="eggNOG" id="COG0090">
    <property type="taxonomic scope" value="Bacteria"/>
</dbReference>
<dbReference type="HOGENOM" id="CLU_036235_2_1_6"/>
<dbReference type="OrthoDB" id="9778722at2"/>
<dbReference type="Proteomes" id="UP000009175">
    <property type="component" value="Chromosome"/>
</dbReference>
<dbReference type="GO" id="GO:0015934">
    <property type="term" value="C:large ribosomal subunit"/>
    <property type="evidence" value="ECO:0007669"/>
    <property type="project" value="InterPro"/>
</dbReference>
<dbReference type="GO" id="GO:0019843">
    <property type="term" value="F:rRNA binding"/>
    <property type="evidence" value="ECO:0007669"/>
    <property type="project" value="UniProtKB-UniRule"/>
</dbReference>
<dbReference type="GO" id="GO:0003735">
    <property type="term" value="F:structural constituent of ribosome"/>
    <property type="evidence" value="ECO:0007669"/>
    <property type="project" value="InterPro"/>
</dbReference>
<dbReference type="GO" id="GO:0016740">
    <property type="term" value="F:transferase activity"/>
    <property type="evidence" value="ECO:0007669"/>
    <property type="project" value="InterPro"/>
</dbReference>
<dbReference type="GO" id="GO:0002181">
    <property type="term" value="P:cytoplasmic translation"/>
    <property type="evidence" value="ECO:0007669"/>
    <property type="project" value="TreeGrafter"/>
</dbReference>
<dbReference type="FunFam" id="2.30.30.30:FF:000001">
    <property type="entry name" value="50S ribosomal protein L2"/>
    <property type="match status" value="1"/>
</dbReference>
<dbReference type="FunFam" id="2.40.50.140:FF:000003">
    <property type="entry name" value="50S ribosomal protein L2"/>
    <property type="match status" value="1"/>
</dbReference>
<dbReference type="FunFam" id="4.10.950.10:FF:000001">
    <property type="entry name" value="50S ribosomal protein L2"/>
    <property type="match status" value="1"/>
</dbReference>
<dbReference type="Gene3D" id="2.30.30.30">
    <property type="match status" value="1"/>
</dbReference>
<dbReference type="Gene3D" id="2.40.50.140">
    <property type="entry name" value="Nucleic acid-binding proteins"/>
    <property type="match status" value="1"/>
</dbReference>
<dbReference type="Gene3D" id="4.10.950.10">
    <property type="entry name" value="Ribosomal protein L2, domain 3"/>
    <property type="match status" value="1"/>
</dbReference>
<dbReference type="HAMAP" id="MF_01320_B">
    <property type="entry name" value="Ribosomal_uL2_B"/>
    <property type="match status" value="1"/>
</dbReference>
<dbReference type="InterPro" id="IPR012340">
    <property type="entry name" value="NA-bd_OB-fold"/>
</dbReference>
<dbReference type="InterPro" id="IPR014722">
    <property type="entry name" value="Rib_uL2_dom2"/>
</dbReference>
<dbReference type="InterPro" id="IPR002171">
    <property type="entry name" value="Ribosomal_uL2"/>
</dbReference>
<dbReference type="InterPro" id="IPR005880">
    <property type="entry name" value="Ribosomal_uL2_bac/org-type"/>
</dbReference>
<dbReference type="InterPro" id="IPR022669">
    <property type="entry name" value="Ribosomal_uL2_C"/>
</dbReference>
<dbReference type="InterPro" id="IPR022671">
    <property type="entry name" value="Ribosomal_uL2_CS"/>
</dbReference>
<dbReference type="InterPro" id="IPR014726">
    <property type="entry name" value="Ribosomal_uL2_dom3"/>
</dbReference>
<dbReference type="InterPro" id="IPR022666">
    <property type="entry name" value="Ribosomal_uL2_RNA-bd_dom"/>
</dbReference>
<dbReference type="InterPro" id="IPR008991">
    <property type="entry name" value="Translation_prot_SH3-like_sf"/>
</dbReference>
<dbReference type="NCBIfam" id="TIGR01171">
    <property type="entry name" value="rplB_bact"/>
    <property type="match status" value="1"/>
</dbReference>
<dbReference type="PANTHER" id="PTHR13691:SF5">
    <property type="entry name" value="LARGE RIBOSOMAL SUBUNIT PROTEIN UL2M"/>
    <property type="match status" value="1"/>
</dbReference>
<dbReference type="PANTHER" id="PTHR13691">
    <property type="entry name" value="RIBOSOMAL PROTEIN L2"/>
    <property type="match status" value="1"/>
</dbReference>
<dbReference type="Pfam" id="PF00181">
    <property type="entry name" value="Ribosomal_L2"/>
    <property type="match status" value="1"/>
</dbReference>
<dbReference type="Pfam" id="PF03947">
    <property type="entry name" value="Ribosomal_L2_C"/>
    <property type="match status" value="1"/>
</dbReference>
<dbReference type="PIRSF" id="PIRSF002158">
    <property type="entry name" value="Ribosomal_L2"/>
    <property type="match status" value="1"/>
</dbReference>
<dbReference type="SMART" id="SM01383">
    <property type="entry name" value="Ribosomal_L2"/>
    <property type="match status" value="1"/>
</dbReference>
<dbReference type="SMART" id="SM01382">
    <property type="entry name" value="Ribosomal_L2_C"/>
    <property type="match status" value="1"/>
</dbReference>
<dbReference type="SUPFAM" id="SSF50249">
    <property type="entry name" value="Nucleic acid-binding proteins"/>
    <property type="match status" value="1"/>
</dbReference>
<dbReference type="SUPFAM" id="SSF50104">
    <property type="entry name" value="Translation proteins SH3-like domain"/>
    <property type="match status" value="1"/>
</dbReference>
<dbReference type="PROSITE" id="PS00467">
    <property type="entry name" value="RIBOSOMAL_L2"/>
    <property type="match status" value="1"/>
</dbReference>
<keyword id="KW-1185">Reference proteome</keyword>
<keyword id="KW-0687">Ribonucleoprotein</keyword>
<keyword id="KW-0689">Ribosomal protein</keyword>
<keyword id="KW-0694">RNA-binding</keyword>
<keyword id="KW-0699">rRNA-binding</keyword>
<sequence length="274" mass="29795">MAIVKCKPTSPGRRGVVKIVNSDLHKGKPFAGLLAKKSKTGGRNNTGRITTRHVGGGHKQHYRLIDFKRNKDGIPGKIERLEYDPNRTANIALVLYADGERRYILAAKGMQAGDKVVSGIDADIKVGNALPLRNIPVGSVVHAVEMKPGKGAQIARSAGAYVQVVARDGEYATLRLRSGEMRKVPVDCRATLGEVGNAEHMLRQLGKAGAKRWRGVRPTVRGVAMNPVDHPHGGGEGRTSGGRHPVTPWGVPTKGYKTRSNKRTDKYIVRRRTK</sequence>
<comment type="function">
    <text evidence="1">One of the primary rRNA binding proteins. Required for association of the 30S and 50S subunits to form the 70S ribosome, for tRNA binding and peptide bond formation. It has been suggested to have peptidyltransferase activity; this is somewhat controversial. Makes several contacts with the 16S rRNA in the 70S ribosome.</text>
</comment>
<comment type="subunit">
    <text evidence="1">Part of the 50S ribosomal subunit. Forms a bridge to the 30S subunit in the 70S ribosome.</text>
</comment>
<comment type="similarity">
    <text evidence="1">Belongs to the universal ribosomal protein uL2 family.</text>
</comment>
<gene>
    <name evidence="1" type="primary">rplB</name>
    <name type="ordered locus">Sama_0216</name>
</gene>
<proteinExistence type="inferred from homology"/>
<accession>A1S221</accession>
<organism>
    <name type="scientific">Shewanella amazonensis (strain ATCC BAA-1098 / SB2B)</name>
    <dbReference type="NCBI Taxonomy" id="326297"/>
    <lineage>
        <taxon>Bacteria</taxon>
        <taxon>Pseudomonadati</taxon>
        <taxon>Pseudomonadota</taxon>
        <taxon>Gammaproteobacteria</taxon>
        <taxon>Alteromonadales</taxon>
        <taxon>Shewanellaceae</taxon>
        <taxon>Shewanella</taxon>
    </lineage>
</organism>
<reference key="1">
    <citation type="submission" date="2006-12" db="EMBL/GenBank/DDBJ databases">
        <title>Complete sequence of Shewanella amazonensis SB2B.</title>
        <authorList>
            <consortium name="US DOE Joint Genome Institute"/>
            <person name="Copeland A."/>
            <person name="Lucas S."/>
            <person name="Lapidus A."/>
            <person name="Barry K."/>
            <person name="Detter J.C."/>
            <person name="Glavina del Rio T."/>
            <person name="Hammon N."/>
            <person name="Israni S."/>
            <person name="Dalin E."/>
            <person name="Tice H."/>
            <person name="Pitluck S."/>
            <person name="Munk A.C."/>
            <person name="Brettin T."/>
            <person name="Bruce D."/>
            <person name="Han C."/>
            <person name="Tapia R."/>
            <person name="Gilna P."/>
            <person name="Schmutz J."/>
            <person name="Larimer F."/>
            <person name="Land M."/>
            <person name="Hauser L."/>
            <person name="Kyrpides N."/>
            <person name="Mikhailova N."/>
            <person name="Fredrickson J."/>
            <person name="Richardson P."/>
        </authorList>
    </citation>
    <scope>NUCLEOTIDE SEQUENCE [LARGE SCALE GENOMIC DNA]</scope>
    <source>
        <strain>ATCC BAA-1098 / SB2B</strain>
    </source>
</reference>
<feature type="chain" id="PRO_0000310008" description="Large ribosomal subunit protein uL2">
    <location>
        <begin position="1"/>
        <end position="274"/>
    </location>
</feature>
<feature type="region of interest" description="Disordered" evidence="2">
    <location>
        <begin position="223"/>
        <end position="274"/>
    </location>
</feature>
<protein>
    <recommendedName>
        <fullName evidence="1">Large ribosomal subunit protein uL2</fullName>
    </recommendedName>
    <alternativeName>
        <fullName evidence="3">50S ribosomal protein L2</fullName>
    </alternativeName>
</protein>
<evidence type="ECO:0000255" key="1">
    <source>
        <dbReference type="HAMAP-Rule" id="MF_01320"/>
    </source>
</evidence>
<evidence type="ECO:0000256" key="2">
    <source>
        <dbReference type="SAM" id="MobiDB-lite"/>
    </source>
</evidence>
<evidence type="ECO:0000305" key="3"/>
<name>RL2_SHEAM</name>